<proteinExistence type="evidence at protein level"/>
<accession>I0DEB5</accession>
<reference key="1">
    <citation type="journal article" date="2012" name="Peptides">
        <title>Gene cloning and functional characterization of four novel antimicrobial-like peptides from scorpions of the family Vaejovidae.</title>
        <authorList>
            <person name="Ramirez-Carreto S."/>
            <person name="Quintero-Hernandez V."/>
            <person name="Jimenez-Vargas J.M."/>
            <person name="Corzo G."/>
            <person name="Possani L.D."/>
            <person name="Becerril B."/>
            <person name="Ortiz E."/>
        </authorList>
    </citation>
    <scope>NUCLEOTIDE SEQUENCE [MRNA]</scope>
    <scope>SYNTHESIS OF 24-36</scope>
    <scope>FUNCTION</scope>
    <scope>CIRCULAR DICHROISM ANALYSIS</scope>
    <scope>NOMENCLATURE</scope>
    <scope>PROBABLE AMIDATION AT LEU-36</scope>
    <source>
        <tissue>Venom gland</tissue>
    </source>
</reference>
<reference key="2">
    <citation type="journal article" date="2021" name="Microb. Pathog.">
        <title>Identification of the scorpion venom-derived antimicrobial peptide Hp1404 as a new antimicrobial agent against carbapenem-resistant Acinetobacter baumannii.</title>
        <authorList>
            <person name="Luo X."/>
            <person name="Ye X."/>
            <person name="Ding L."/>
            <person name="Zhu W."/>
            <person name="Zhao Z."/>
            <person name="Luo D."/>
            <person name="Liu N."/>
            <person name="Sun L."/>
            <person name="Chen Z."/>
        </authorList>
    </citation>
    <scope>SYNTHESIS OF 24-36 (AMIDATED PEPTIDE)</scope>
</reference>
<protein>
    <recommendedName>
        <fullName evidence="3">Amphipathic peptide CT1</fullName>
        <shortName evidence="3 4">VsCT1</shortName>
    </recommendedName>
    <alternativeName>
        <fullName evidence="3">Non-disulfide-bridged peptide 5.11</fullName>
        <shortName evidence="3">NDBP-5.11</shortName>
    </alternativeName>
</protein>
<sequence>MKTQIVILIVAVLFLQLVSQSDAFLKGIIDTVSNWLGKRGLKNLDQYNDLFDGEISDADIKFLKDLMR</sequence>
<dbReference type="EMBL" id="JQ086327">
    <property type="protein sequence ID" value="AFH87946.1"/>
    <property type="molecule type" value="mRNA"/>
</dbReference>
<dbReference type="SMR" id="I0DEB5"/>
<dbReference type="GO" id="GO:0005576">
    <property type="term" value="C:extracellular region"/>
    <property type="evidence" value="ECO:0007669"/>
    <property type="project" value="UniProtKB-SubCell"/>
</dbReference>
<dbReference type="GO" id="GO:0016020">
    <property type="term" value="C:membrane"/>
    <property type="evidence" value="ECO:0007669"/>
    <property type="project" value="UniProtKB-KW"/>
</dbReference>
<dbReference type="GO" id="GO:0044218">
    <property type="term" value="C:other organism cell membrane"/>
    <property type="evidence" value="ECO:0007669"/>
    <property type="project" value="UniProtKB-KW"/>
</dbReference>
<dbReference type="GO" id="GO:0042742">
    <property type="term" value="P:defense response to bacterium"/>
    <property type="evidence" value="ECO:0007669"/>
    <property type="project" value="UniProtKB-KW"/>
</dbReference>
<dbReference type="GO" id="GO:0031640">
    <property type="term" value="P:killing of cells of another organism"/>
    <property type="evidence" value="ECO:0007669"/>
    <property type="project" value="UniProtKB-KW"/>
</dbReference>
<feature type="signal peptide" evidence="1">
    <location>
        <begin position="1"/>
        <end position="23"/>
    </location>
</feature>
<feature type="peptide" id="PRO_0000418777" description="Amphipathic peptide CT1" evidence="6">
    <location>
        <begin position="24"/>
        <end position="36"/>
    </location>
</feature>
<feature type="propeptide" id="PRO_0000418778" evidence="6">
    <location>
        <begin position="40"/>
        <end position="68"/>
    </location>
</feature>
<feature type="modified residue" description="Leucine amide" evidence="6">
    <location>
        <position position="36"/>
    </location>
</feature>
<evidence type="ECO:0000255" key="1"/>
<evidence type="ECO:0000269" key="2">
    <source>
    </source>
</evidence>
<evidence type="ECO:0000303" key="3">
    <source>
    </source>
</evidence>
<evidence type="ECO:0000303" key="4">
    <source>
    </source>
</evidence>
<evidence type="ECO:0000305" key="5"/>
<evidence type="ECO:0000305" key="6">
    <source>
    </source>
</evidence>
<evidence type="ECO:0000305" key="7">
    <source>
    </source>
</evidence>
<name>NDB4S_MESSU</name>
<organism>
    <name type="scientific">Mesomexovis subcristatus</name>
    <name type="common">Scorpion</name>
    <name type="synonym">Vaejovis subcristatus</name>
    <dbReference type="NCBI Taxonomy" id="1532995"/>
    <lineage>
        <taxon>Eukaryota</taxon>
        <taxon>Metazoa</taxon>
        <taxon>Ecdysozoa</taxon>
        <taxon>Arthropoda</taxon>
        <taxon>Chelicerata</taxon>
        <taxon>Arachnida</taxon>
        <taxon>Scorpiones</taxon>
        <taxon>Iurida</taxon>
        <taxon>Chactoidea</taxon>
        <taxon>Vaejovidae</taxon>
        <taxon>Mesomexovis</taxon>
    </lineage>
</organism>
<comment type="function">
    <text evidence="2">Amphipathic peptide that shows no antibacterial activity even at 50 uM but shows a low hemolytic activity against human erythrocytes.</text>
</comment>
<comment type="subcellular location">
    <subcellularLocation>
        <location evidence="6">Secreted</location>
    </subcellularLocation>
    <subcellularLocation>
        <location evidence="5">Target cell membrane</location>
    </subcellularLocation>
</comment>
<comment type="tissue specificity">
    <text evidence="6">Expressed by the venom gland.</text>
</comment>
<comment type="domain">
    <text evidence="7">Amphipathic and cationic peptide with an alpha-helical structure.</text>
</comment>
<comment type="similarity">
    <text evidence="5">Belongs to the non-disulfide-bridged peptide (NDBP) superfamily. Short antimicrobial peptide (group 4) family.</text>
</comment>
<keyword id="KW-0027">Amidation</keyword>
<keyword id="KW-0044">Antibiotic</keyword>
<keyword id="KW-0929">Antimicrobial</keyword>
<keyword id="KW-0165">Cleavage on pair of basic residues</keyword>
<keyword id="KW-0204">Cytolysis</keyword>
<keyword id="KW-0472">Membrane</keyword>
<keyword id="KW-0964">Secreted</keyword>
<keyword id="KW-0732">Signal</keyword>
<keyword id="KW-1052">Target cell membrane</keyword>
<keyword id="KW-1053">Target membrane</keyword>